<keyword id="KW-0002">3D-structure</keyword>
<keyword id="KW-0025">Alternative splicing</keyword>
<keyword id="KW-0106">Calcium</keyword>
<keyword id="KW-0130">Cell adhesion</keyword>
<keyword id="KW-1003">Cell membrane</keyword>
<keyword id="KW-0225">Disease variant</keyword>
<keyword id="KW-1015">Disulfide bond</keyword>
<keyword id="KW-0887">Epilepsy</keyword>
<keyword id="KW-0325">Glycoprotein</keyword>
<keyword id="KW-0991">Intellectual disability</keyword>
<keyword id="KW-0472">Membrane</keyword>
<keyword id="KW-0479">Metal-binding</keyword>
<keyword id="KW-1267">Proteomics identification</keyword>
<keyword id="KW-1185">Reference proteome</keyword>
<keyword id="KW-0677">Repeat</keyword>
<keyword id="KW-0732">Signal</keyword>
<keyword id="KW-0812">Transmembrane</keyword>
<keyword id="KW-1133">Transmembrane helix</keyword>
<protein>
    <recommendedName>
        <fullName>Protocadherin-19</fullName>
    </recommendedName>
</protein>
<proteinExistence type="evidence at protein level"/>
<sequence>MESLLLPVLLLLAILWTQAAALINLKYSVEEEQRAGTVIANVAKDAREAGFALDPRQASAFRVVSNSAPHLVDINPSSGLLVTKQKIDRDLLCRQSPKCIISLEVMSSSMEICVIKVEIKDLNDNAPSFPAAQIELEISEAASPGTRIPLDSAYDPDSGSFGVQTYELTPNELFGLEIKTRGDGSRFAELVVEKSLDRETQSHYSFRITALDGGDPPRLGTVGLSIKVTDSNDNNPVFSESTYAVSVPENSPPNTPVIRLNASDPDEGTNGQVVYSFYGYVNDRTRELFQIDPHSGLVTVTGALDYEEGHVYELDVQAKDLGPNSIPAHCKVTVSVLDTNDNPPVINLLSVNSELVEVSESAPPGYVIALVRVSDRDSGLNGRVQCRLLGNVPFRLQEYESFSTILVDGRLDREQHDQYNLTIQARDGGVPMLQSAKSFTVLITDENDNHPHFSKPYYQVIVQENNTPGAYLLSVSARDPDLGLNGSVSYQIVPSQVRDMPVFTYVSINPNSGDIYALRSFNHEQTKAFEFKVLAKDGGLPSLQSNATVRVIILDVNDNTPVITAPPLINGTAEVYIPRNSGIGYLVTVVKAEDYDEGENGRVTYDMTEGDRGFFEIDQVNGEVRTTRTFGESSKSSYELIVVAHDHGKTSLSASALVLIYLSPALDAQESMGSVNLSLIFIIALGSIAGILFVTMIFVAIKCKRDNKEIRTYNCSNCLTITCLLGCFIKGQNSKCLHCISVSPISEEQDKKTEEKVSLRGKRIAEYSYGHQKKSSKKKKISKNDIRLVPRDVEETDKMNVVSCSSLTSSLNYFDYHQQTLPLGCRRSESTFLNVENQNTRNTSANHIYHHSFNSQGPQQPDLIINGVPLPETENYSFDSNYVNSRAHLIKSSSTFKDLEGNSLKDSGHEESDQTDSEHDVQRSLYCDTAVNDVLNTSVTSMGSQMPDHDQNEGFHCREECRILGHSDRCWMPRNPMPIRSKSPEHVRNIIALSIEATAADVEAYDDCGPTKRTFATFGKDVSDHPAEERPTLKGKRTVDVTICSPKVNSVIREAGNGCEAISPVTSPLHLKSSLPTKPSVSYTIALAPPARDLEQYVNNVNNGPTRPSEAEPRGADSEKVMHEVSPILKEGRNKESPGVKRLKDIVL</sequence>
<name>PCD19_HUMAN</name>
<dbReference type="EMBL" id="EF676096">
    <property type="protein sequence ID" value="ABX58058.1"/>
    <property type="molecule type" value="mRNA"/>
</dbReference>
<dbReference type="EMBL" id="AL355593">
    <property type="status" value="NOT_ANNOTATED_CDS"/>
    <property type="molecule type" value="Genomic_DNA"/>
</dbReference>
<dbReference type="EMBL" id="CR749278">
    <property type="protein sequence ID" value="CAH18133.1"/>
    <property type="status" value="ALT_INIT"/>
    <property type="molecule type" value="mRNA"/>
</dbReference>
<dbReference type="EMBL" id="AB037734">
    <property type="protein sequence ID" value="BAA92551.1"/>
    <property type="molecule type" value="mRNA"/>
</dbReference>
<dbReference type="CCDS" id="CCDS43976.1">
    <molecule id="Q8TAB3-2"/>
</dbReference>
<dbReference type="CCDS" id="CCDS48141.1">
    <molecule id="Q8TAB3-3"/>
</dbReference>
<dbReference type="CCDS" id="CCDS55462.1">
    <molecule id="Q8TAB3-1"/>
</dbReference>
<dbReference type="RefSeq" id="NP_001098713.1">
    <molecule id="Q8TAB3-2"/>
    <property type="nucleotide sequence ID" value="NM_001105243.2"/>
</dbReference>
<dbReference type="RefSeq" id="NP_001171809.1">
    <molecule id="Q8TAB3-1"/>
    <property type="nucleotide sequence ID" value="NM_001184880.2"/>
</dbReference>
<dbReference type="RefSeq" id="NP_065817.2">
    <molecule id="Q8TAB3-3"/>
    <property type="nucleotide sequence ID" value="NM_020766.3"/>
</dbReference>
<dbReference type="PDB" id="6VFU">
    <property type="method" value="X-ray"/>
    <property type="resolution" value="3.50 A"/>
    <property type="chains" value="A/B/C=22-445"/>
</dbReference>
<dbReference type="PDBsum" id="6VFU"/>
<dbReference type="SMR" id="Q8TAB3"/>
<dbReference type="BioGRID" id="121586">
    <property type="interactions" value="24"/>
</dbReference>
<dbReference type="FunCoup" id="Q8TAB3">
    <property type="interactions" value="233"/>
</dbReference>
<dbReference type="IntAct" id="Q8TAB3">
    <property type="interactions" value="8"/>
</dbReference>
<dbReference type="STRING" id="9606.ENSP00000362125"/>
<dbReference type="DrugBank" id="DB01373">
    <property type="generic name" value="Calcium"/>
</dbReference>
<dbReference type="GlyCosmos" id="Q8TAB3">
    <property type="glycosylation" value="6 sites, No reported glycans"/>
</dbReference>
<dbReference type="GlyGen" id="Q8TAB3">
    <property type="glycosylation" value="6 sites, 1 N-linked glycan (2 sites)"/>
</dbReference>
<dbReference type="iPTMnet" id="Q8TAB3"/>
<dbReference type="PhosphoSitePlus" id="Q8TAB3"/>
<dbReference type="SwissPalm" id="Q8TAB3"/>
<dbReference type="BioMuta" id="PCDH19"/>
<dbReference type="DMDM" id="73620979"/>
<dbReference type="jPOST" id="Q8TAB3"/>
<dbReference type="MassIVE" id="Q8TAB3"/>
<dbReference type="PaxDb" id="9606-ENSP00000362125"/>
<dbReference type="PeptideAtlas" id="Q8TAB3"/>
<dbReference type="ProteomicsDB" id="19048"/>
<dbReference type="ProteomicsDB" id="73850">
    <molecule id="Q8TAB3-1"/>
</dbReference>
<dbReference type="ProteomicsDB" id="73851">
    <molecule id="Q8TAB3-2"/>
</dbReference>
<dbReference type="TopDownProteomics" id="Q8TAB3-3">
    <molecule id="Q8TAB3-3"/>
</dbReference>
<dbReference type="Antibodypedia" id="429">
    <property type="antibodies" value="42 antibodies from 16 providers"/>
</dbReference>
<dbReference type="DNASU" id="57526"/>
<dbReference type="Ensembl" id="ENST00000255531.8">
    <molecule id="Q8TAB3-2"/>
    <property type="protein sequence ID" value="ENSP00000255531.7"/>
    <property type="gene ID" value="ENSG00000165194.15"/>
</dbReference>
<dbReference type="Ensembl" id="ENST00000373034.8">
    <molecule id="Q8TAB3-1"/>
    <property type="protein sequence ID" value="ENSP00000362125.4"/>
    <property type="gene ID" value="ENSG00000165194.15"/>
</dbReference>
<dbReference type="Ensembl" id="ENST00000420881.6">
    <molecule id="Q8TAB3-3"/>
    <property type="protein sequence ID" value="ENSP00000400327.2"/>
    <property type="gene ID" value="ENSG00000165194.15"/>
</dbReference>
<dbReference type="GeneID" id="57526"/>
<dbReference type="KEGG" id="hsa:57526"/>
<dbReference type="MANE-Select" id="ENST00000373034.8">
    <property type="protein sequence ID" value="ENSP00000362125.4"/>
    <property type="RefSeq nucleotide sequence ID" value="NM_001184880.2"/>
    <property type="RefSeq protein sequence ID" value="NP_001171809.1"/>
</dbReference>
<dbReference type="UCSC" id="uc004efw.5">
    <molecule id="Q8TAB3-1"/>
    <property type="organism name" value="human"/>
</dbReference>
<dbReference type="AGR" id="HGNC:14270"/>
<dbReference type="CTD" id="57526"/>
<dbReference type="DisGeNET" id="57526"/>
<dbReference type="GeneCards" id="PCDH19"/>
<dbReference type="HGNC" id="HGNC:14270">
    <property type="gene designation" value="PCDH19"/>
</dbReference>
<dbReference type="HPA" id="ENSG00000165194">
    <property type="expression patterns" value="Tissue enhanced (brain)"/>
</dbReference>
<dbReference type="MalaCards" id="PCDH19"/>
<dbReference type="MIM" id="300088">
    <property type="type" value="phenotype"/>
</dbReference>
<dbReference type="MIM" id="300460">
    <property type="type" value="gene"/>
</dbReference>
<dbReference type="neXtProt" id="NX_Q8TAB3"/>
<dbReference type="OpenTargets" id="ENSG00000165194"/>
<dbReference type="Orphanet" id="33069">
    <property type="disease" value="Dravet syndrome"/>
</dbReference>
<dbReference type="Orphanet" id="101039">
    <property type="disease" value="Female restricted epilepsy with intellectual disability"/>
</dbReference>
<dbReference type="PharmGKB" id="PA33003"/>
<dbReference type="VEuPathDB" id="HostDB:ENSG00000165194"/>
<dbReference type="eggNOG" id="KOG3594">
    <property type="taxonomic scope" value="Eukaryota"/>
</dbReference>
<dbReference type="GeneTree" id="ENSGT00940000159162"/>
<dbReference type="HOGENOM" id="CLU_006480_1_1_1"/>
<dbReference type="InParanoid" id="Q8TAB3"/>
<dbReference type="OMA" id="RCWMPRG"/>
<dbReference type="OrthoDB" id="6252479at2759"/>
<dbReference type="PAN-GO" id="Q8TAB3">
    <property type="GO annotations" value="2 GO annotations based on evolutionary models"/>
</dbReference>
<dbReference type="PhylomeDB" id="Q8TAB3"/>
<dbReference type="TreeFam" id="TF352008"/>
<dbReference type="PathwayCommons" id="Q8TAB3"/>
<dbReference type="Reactome" id="R-HSA-9830364">
    <property type="pathway name" value="Formation of the nephric duct"/>
</dbReference>
<dbReference type="SignaLink" id="Q8TAB3"/>
<dbReference type="SIGNOR" id="Q8TAB3"/>
<dbReference type="BioGRID-ORCS" id="57526">
    <property type="hits" value="10 hits in 766 CRISPR screens"/>
</dbReference>
<dbReference type="ChiTaRS" id="PCDH19">
    <property type="organism name" value="human"/>
</dbReference>
<dbReference type="GenomeRNAi" id="57526"/>
<dbReference type="Pharos" id="Q8TAB3">
    <property type="development level" value="Tbio"/>
</dbReference>
<dbReference type="PRO" id="PR:Q8TAB3"/>
<dbReference type="Proteomes" id="UP000005640">
    <property type="component" value="Chromosome X"/>
</dbReference>
<dbReference type="RNAct" id="Q8TAB3">
    <property type="molecule type" value="protein"/>
</dbReference>
<dbReference type="Bgee" id="ENSG00000165194">
    <property type="expression patterns" value="Expressed in cortical plate and 132 other cell types or tissues"/>
</dbReference>
<dbReference type="ExpressionAtlas" id="Q8TAB3">
    <property type="expression patterns" value="baseline and differential"/>
</dbReference>
<dbReference type="GO" id="GO:0005886">
    <property type="term" value="C:plasma membrane"/>
    <property type="evidence" value="ECO:0000318"/>
    <property type="project" value="GO_Central"/>
</dbReference>
<dbReference type="GO" id="GO:0005509">
    <property type="term" value="F:calcium ion binding"/>
    <property type="evidence" value="ECO:0007669"/>
    <property type="project" value="InterPro"/>
</dbReference>
<dbReference type="GO" id="GO:0007155">
    <property type="term" value="P:cell adhesion"/>
    <property type="evidence" value="ECO:0000318"/>
    <property type="project" value="GO_Central"/>
</dbReference>
<dbReference type="GO" id="GO:0007156">
    <property type="term" value="P:homophilic cell adhesion via plasma membrane adhesion molecules"/>
    <property type="evidence" value="ECO:0007669"/>
    <property type="project" value="InterPro"/>
</dbReference>
<dbReference type="CDD" id="cd11304">
    <property type="entry name" value="Cadherin_repeat"/>
    <property type="match status" value="6"/>
</dbReference>
<dbReference type="FunFam" id="2.60.40.60:FF:000001">
    <property type="entry name" value="Protocadherin alpha 2"/>
    <property type="match status" value="1"/>
</dbReference>
<dbReference type="FunFam" id="2.60.40.60:FF:000002">
    <property type="entry name" value="Protocadherin alpha 2"/>
    <property type="match status" value="1"/>
</dbReference>
<dbReference type="FunFam" id="2.60.40.60:FF:000007">
    <property type="entry name" value="Protocadherin alpha 2"/>
    <property type="match status" value="1"/>
</dbReference>
<dbReference type="FunFam" id="2.60.40.60:FF:000042">
    <property type="entry name" value="protocadherin-19 isoform X1"/>
    <property type="match status" value="1"/>
</dbReference>
<dbReference type="FunFam" id="2.60.40.60:FF:000088">
    <property type="entry name" value="protocadherin-19 isoform X2"/>
    <property type="match status" value="1"/>
</dbReference>
<dbReference type="FunFam" id="2.60.40.60:FF:000099">
    <property type="entry name" value="protocadherin-19 isoform X2"/>
    <property type="match status" value="1"/>
</dbReference>
<dbReference type="Gene3D" id="2.60.40.60">
    <property type="entry name" value="Cadherins"/>
    <property type="match status" value="6"/>
</dbReference>
<dbReference type="InterPro" id="IPR002126">
    <property type="entry name" value="Cadherin-like_dom"/>
</dbReference>
<dbReference type="InterPro" id="IPR015919">
    <property type="entry name" value="Cadherin-like_sf"/>
</dbReference>
<dbReference type="InterPro" id="IPR020894">
    <property type="entry name" value="Cadherin_CS"/>
</dbReference>
<dbReference type="InterPro" id="IPR013164">
    <property type="entry name" value="Cadherin_N"/>
</dbReference>
<dbReference type="InterPro" id="IPR050174">
    <property type="entry name" value="Protocadherin/Cadherin-CA"/>
</dbReference>
<dbReference type="PANTHER" id="PTHR24028">
    <property type="entry name" value="CADHERIN-87A"/>
    <property type="match status" value="1"/>
</dbReference>
<dbReference type="PANTHER" id="PTHR24028:SF40">
    <property type="entry name" value="PROTOCADHERIN-19"/>
    <property type="match status" value="1"/>
</dbReference>
<dbReference type="Pfam" id="PF00028">
    <property type="entry name" value="Cadherin"/>
    <property type="match status" value="5"/>
</dbReference>
<dbReference type="Pfam" id="PF08266">
    <property type="entry name" value="Cadherin_2"/>
    <property type="match status" value="1"/>
</dbReference>
<dbReference type="PRINTS" id="PR00205">
    <property type="entry name" value="CADHERIN"/>
</dbReference>
<dbReference type="SMART" id="SM00112">
    <property type="entry name" value="CA"/>
    <property type="match status" value="6"/>
</dbReference>
<dbReference type="SUPFAM" id="SSF49313">
    <property type="entry name" value="Cadherin-like"/>
    <property type="match status" value="5"/>
</dbReference>
<dbReference type="PROSITE" id="PS00232">
    <property type="entry name" value="CADHERIN_1"/>
    <property type="match status" value="5"/>
</dbReference>
<dbReference type="PROSITE" id="PS50268">
    <property type="entry name" value="CADHERIN_2"/>
    <property type="match status" value="6"/>
</dbReference>
<feature type="signal peptide" evidence="2">
    <location>
        <begin position="1"/>
        <end position="21"/>
    </location>
</feature>
<feature type="chain" id="PRO_0000004003" description="Protocadherin-19">
    <location>
        <begin position="22"/>
        <end position="1148"/>
    </location>
</feature>
<feature type="topological domain" description="Extracellular" evidence="2">
    <location>
        <begin position="22"/>
        <end position="678"/>
    </location>
</feature>
<feature type="transmembrane region" description="Helical" evidence="2">
    <location>
        <begin position="679"/>
        <end position="699"/>
    </location>
</feature>
<feature type="topological domain" description="Cytoplasmic" evidence="2">
    <location>
        <begin position="700"/>
        <end position="1148"/>
    </location>
</feature>
<feature type="domain" description="Cadherin 1" evidence="3">
    <location>
        <begin position="22"/>
        <end position="129"/>
    </location>
</feature>
<feature type="domain" description="Cadherin 2" evidence="3">
    <location>
        <begin position="130"/>
        <end position="238"/>
    </location>
</feature>
<feature type="domain" description="Cadherin 3" evidence="3">
    <location>
        <begin position="239"/>
        <end position="346"/>
    </location>
</feature>
<feature type="domain" description="Cadherin 4" evidence="3">
    <location>
        <begin position="350"/>
        <end position="453"/>
    </location>
</feature>
<feature type="domain" description="Cadherin 5" evidence="3">
    <location>
        <begin position="454"/>
        <end position="563"/>
    </location>
</feature>
<feature type="domain" description="Cadherin 6" evidence="3">
    <location>
        <begin position="569"/>
        <end position="672"/>
    </location>
</feature>
<feature type="region of interest" description="Disordered" evidence="4">
    <location>
        <begin position="901"/>
        <end position="921"/>
    </location>
</feature>
<feature type="region of interest" description="Disordered" evidence="4">
    <location>
        <begin position="1100"/>
        <end position="1148"/>
    </location>
</feature>
<feature type="compositionally biased region" description="Basic and acidic residues" evidence="4">
    <location>
        <begin position="906"/>
        <end position="921"/>
    </location>
</feature>
<feature type="compositionally biased region" description="Basic and acidic residues" evidence="4">
    <location>
        <begin position="1109"/>
        <end position="1123"/>
    </location>
</feature>
<feature type="compositionally biased region" description="Basic and acidic residues" evidence="4">
    <location>
        <begin position="1130"/>
        <end position="1148"/>
    </location>
</feature>
<feature type="binding site" evidence="1">
    <location>
        <position position="31"/>
    </location>
    <ligand>
        <name>Ca(2+)</name>
        <dbReference type="ChEBI" id="CHEBI:29108"/>
        <label>1</label>
    </ligand>
</feature>
<feature type="binding site" evidence="1">
    <location>
        <position position="31"/>
    </location>
    <ligand>
        <name>Ca(2+)</name>
        <dbReference type="ChEBI" id="CHEBI:29108"/>
        <label>2</label>
    </ligand>
</feature>
<feature type="binding site" evidence="1">
    <location>
        <position position="32"/>
    </location>
    <ligand>
        <name>Ca(2+)</name>
        <dbReference type="ChEBI" id="CHEBI:29108"/>
        <label>1</label>
    </ligand>
</feature>
<feature type="binding site" evidence="1">
    <location>
        <position position="88"/>
    </location>
    <ligand>
        <name>Ca(2+)</name>
        <dbReference type="ChEBI" id="CHEBI:29108"/>
        <label>1</label>
    </ligand>
</feature>
<feature type="binding site" evidence="1">
    <location>
        <position position="90"/>
    </location>
    <ligand>
        <name>Ca(2+)</name>
        <dbReference type="ChEBI" id="CHEBI:29108"/>
        <label>1</label>
    </ligand>
</feature>
<feature type="binding site" evidence="1">
    <location>
        <position position="90"/>
    </location>
    <ligand>
        <name>Ca(2+)</name>
        <dbReference type="ChEBI" id="CHEBI:29108"/>
        <label>2</label>
    </ligand>
</feature>
<feature type="binding site" evidence="1">
    <location>
        <position position="121"/>
    </location>
    <ligand>
        <name>Ca(2+)</name>
        <dbReference type="ChEBI" id="CHEBI:29108"/>
        <label>2</label>
    </ligand>
</feature>
<feature type="binding site" evidence="1">
    <location>
        <position position="123"/>
    </location>
    <ligand>
        <name>Ca(2+)</name>
        <dbReference type="ChEBI" id="CHEBI:29108"/>
        <label>3</label>
    </ligand>
</feature>
<feature type="binding site" evidence="1">
    <location>
        <position position="124"/>
    </location>
    <ligand>
        <name>Ca(2+)</name>
        <dbReference type="ChEBI" id="CHEBI:29108"/>
        <label>1</label>
    </ligand>
</feature>
<feature type="binding site" evidence="1">
    <location>
        <position position="124"/>
    </location>
    <ligand>
        <name>Ca(2+)</name>
        <dbReference type="ChEBI" id="CHEBI:29108"/>
        <label>2</label>
    </ligand>
</feature>
<feature type="binding site" evidence="1">
    <location>
        <position position="125"/>
    </location>
    <ligand>
        <name>Ca(2+)</name>
        <dbReference type="ChEBI" id="CHEBI:29108"/>
        <label>3</label>
    </ligand>
</feature>
<feature type="binding site" evidence="1">
    <location>
        <position position="140"/>
    </location>
    <ligand>
        <name>Ca(2+)</name>
        <dbReference type="ChEBI" id="CHEBI:29108"/>
        <label>4</label>
    </ligand>
</feature>
<feature type="binding site" evidence="1">
    <location>
        <position position="140"/>
    </location>
    <ligand>
        <name>Ca(2+)</name>
        <dbReference type="ChEBI" id="CHEBI:29108"/>
        <label>5</label>
    </ligand>
</feature>
<feature type="binding site" evidence="1">
    <location>
        <position position="155"/>
    </location>
    <ligand>
        <name>Ca(2+)</name>
        <dbReference type="ChEBI" id="CHEBI:29108"/>
        <label>3</label>
    </ligand>
</feature>
<feature type="binding site" evidence="1">
    <location>
        <position position="157"/>
    </location>
    <ligand>
        <name>Ca(2+)</name>
        <dbReference type="ChEBI" id="CHEBI:29108"/>
        <label>2</label>
    </ligand>
</feature>
<feature type="binding site" evidence="1">
    <location>
        <position position="157"/>
    </location>
    <ligand>
        <name>Ca(2+)</name>
        <dbReference type="ChEBI" id="CHEBI:29108"/>
        <label>3</label>
    </ligand>
</feature>
<feature type="binding site" evidence="1">
    <location>
        <position position="199"/>
    </location>
    <ligand>
        <name>Ca(2+)</name>
        <dbReference type="ChEBI" id="CHEBI:29108"/>
        <label>4</label>
    </ligand>
</feature>
<feature type="binding site" evidence="1">
    <location>
        <position position="199"/>
    </location>
    <ligand>
        <name>Ca(2+)</name>
        <dbReference type="ChEBI" id="CHEBI:29108"/>
        <label>5</label>
    </ligand>
</feature>
<feature type="binding site" evidence="1">
    <location>
        <position position="212"/>
    </location>
    <ligand>
        <name>Ca(2+)</name>
        <dbReference type="ChEBI" id="CHEBI:29108"/>
        <label>3</label>
    </ligand>
</feature>
<feature type="binding site" evidence="1">
    <location>
        <position position="230"/>
    </location>
    <ligand>
        <name>Ca(2+)</name>
        <dbReference type="ChEBI" id="CHEBI:29108"/>
        <label>5</label>
    </ligand>
</feature>
<feature type="binding site" evidence="1">
    <location>
        <position position="231"/>
    </location>
    <ligand>
        <name>Ca(2+)</name>
        <dbReference type="ChEBI" id="CHEBI:29108"/>
        <label>5</label>
    </ligand>
</feature>
<feature type="binding site" evidence="1">
    <location>
        <position position="232"/>
    </location>
    <ligand>
        <name>Ca(2+)</name>
        <dbReference type="ChEBI" id="CHEBI:29108"/>
        <label>6</label>
    </ligand>
</feature>
<feature type="binding site" evidence="1">
    <location>
        <position position="233"/>
    </location>
    <ligand>
        <name>Ca(2+)</name>
        <dbReference type="ChEBI" id="CHEBI:29108"/>
        <label>4</label>
    </ligand>
</feature>
<feature type="binding site" evidence="1">
    <location>
        <position position="233"/>
    </location>
    <ligand>
        <name>Ca(2+)</name>
        <dbReference type="ChEBI" id="CHEBI:29108"/>
        <label>5</label>
    </ligand>
</feature>
<feature type="binding site" evidence="1">
    <location>
        <position position="234"/>
    </location>
    <ligand>
        <name>Ca(2+)</name>
        <dbReference type="ChEBI" id="CHEBI:29108"/>
        <label>6</label>
    </ligand>
</feature>
<feature type="binding site" evidence="1">
    <location>
        <position position="249"/>
    </location>
    <ligand>
        <name>Ca(2+)</name>
        <dbReference type="ChEBI" id="CHEBI:29108"/>
        <label>7</label>
    </ligand>
</feature>
<feature type="binding site" evidence="1">
    <location>
        <position position="249"/>
    </location>
    <ligand>
        <name>Ca(2+)</name>
        <dbReference type="ChEBI" id="CHEBI:29108"/>
        <label>8</label>
    </ligand>
</feature>
<feature type="binding site" evidence="1">
    <location>
        <position position="264"/>
    </location>
    <ligand>
        <name>Ca(2+)</name>
        <dbReference type="ChEBI" id="CHEBI:29108"/>
        <label>6</label>
    </ligand>
</feature>
<feature type="binding site" evidence="1">
    <location>
        <position position="266"/>
    </location>
    <ligand>
        <name>Ca(2+)</name>
        <dbReference type="ChEBI" id="CHEBI:29108"/>
        <label>5</label>
    </ligand>
</feature>
<feature type="binding site" evidence="1">
    <location>
        <position position="266"/>
    </location>
    <ligand>
        <name>Ca(2+)</name>
        <dbReference type="ChEBI" id="CHEBI:29108"/>
        <label>6</label>
    </ligand>
</feature>
<feature type="binding site" evidence="1">
    <location>
        <position position="270"/>
    </location>
    <ligand>
        <name>Ca(2+)</name>
        <dbReference type="ChEBI" id="CHEBI:29108"/>
        <label>6</label>
    </ligand>
</feature>
<feature type="binding site" evidence="1">
    <location>
        <position position="305"/>
    </location>
    <ligand>
        <name>Ca(2+)</name>
        <dbReference type="ChEBI" id="CHEBI:29108"/>
        <label>7</label>
    </ligand>
</feature>
<feature type="binding site" evidence="1">
    <location>
        <position position="307"/>
    </location>
    <ligand>
        <name>Ca(2+)</name>
        <dbReference type="ChEBI" id="CHEBI:29108"/>
        <label>7</label>
    </ligand>
</feature>
<feature type="binding site" evidence="1">
    <location>
        <position position="307"/>
    </location>
    <ligand>
        <name>Ca(2+)</name>
        <dbReference type="ChEBI" id="CHEBI:29108"/>
        <label>8</label>
    </ligand>
</feature>
<feature type="binding site" evidence="1">
    <location>
        <position position="338"/>
    </location>
    <ligand>
        <name>Ca(2+)</name>
        <dbReference type="ChEBI" id="CHEBI:29108"/>
        <label>8</label>
    </ligand>
</feature>
<feature type="binding site" evidence="1">
    <location>
        <position position="340"/>
    </location>
    <ligand>
        <name>Ca(2+)</name>
        <dbReference type="ChEBI" id="CHEBI:29108"/>
        <label>9</label>
    </ligand>
</feature>
<feature type="binding site" evidence="1">
    <location>
        <position position="341"/>
    </location>
    <ligand>
        <name>Ca(2+)</name>
        <dbReference type="ChEBI" id="CHEBI:29108"/>
        <label>7</label>
    </ligand>
</feature>
<feature type="binding site" evidence="1">
    <location>
        <position position="341"/>
    </location>
    <ligand>
        <name>Ca(2+)</name>
        <dbReference type="ChEBI" id="CHEBI:29108"/>
        <label>8</label>
    </ligand>
</feature>
<feature type="binding site" evidence="1">
    <location>
        <position position="342"/>
    </location>
    <ligand>
        <name>Ca(2+)</name>
        <dbReference type="ChEBI" id="CHEBI:29108"/>
        <label>7</label>
    </ligand>
</feature>
<feature type="binding site" evidence="1">
    <location>
        <position position="342"/>
    </location>
    <ligand>
        <name>Ca(2+)</name>
        <dbReference type="ChEBI" id="CHEBI:29108"/>
        <label>9</label>
    </ligand>
</feature>
<feature type="binding site" evidence="1">
    <location>
        <position position="360"/>
    </location>
    <ligand>
        <name>Ca(2+)</name>
        <dbReference type="ChEBI" id="CHEBI:29108"/>
        <label>10</label>
    </ligand>
</feature>
<feature type="binding site" evidence="1">
    <location>
        <position position="360"/>
    </location>
    <ligand>
        <name>Ca(2+)</name>
        <dbReference type="ChEBI" id="CHEBI:29108"/>
        <label>11</label>
    </ligand>
</feature>
<feature type="binding site" evidence="1">
    <location>
        <position position="375"/>
    </location>
    <ligand>
        <name>Ca(2+)</name>
        <dbReference type="ChEBI" id="CHEBI:29108"/>
        <label>9</label>
    </ligand>
</feature>
<feature type="binding site" evidence="1">
    <location>
        <position position="377"/>
    </location>
    <ligand>
        <name>Ca(2+)</name>
        <dbReference type="ChEBI" id="CHEBI:29108"/>
        <label>8</label>
    </ligand>
</feature>
<feature type="binding site" evidence="1">
    <location>
        <position position="377"/>
    </location>
    <ligand>
        <name>Ca(2+)</name>
        <dbReference type="ChEBI" id="CHEBI:29108"/>
        <label>9</label>
    </ligand>
</feature>
<feature type="binding site" evidence="1">
    <location>
        <position position="381"/>
    </location>
    <ligand>
        <name>Ca(2+)</name>
        <dbReference type="ChEBI" id="CHEBI:29108"/>
        <label>9</label>
    </ligand>
</feature>
<feature type="binding site" evidence="1">
    <location>
        <position position="412"/>
    </location>
    <ligand>
        <name>Ca(2+)</name>
        <dbReference type="ChEBI" id="CHEBI:29108"/>
        <label>10</label>
    </ligand>
</feature>
<feature type="binding site" evidence="1">
    <location>
        <position position="414"/>
    </location>
    <ligand>
        <name>Ca(2+)</name>
        <dbReference type="ChEBI" id="CHEBI:29108"/>
        <label>10</label>
    </ligand>
</feature>
<feature type="binding site" evidence="1">
    <location>
        <position position="414"/>
    </location>
    <ligand>
        <name>Ca(2+)</name>
        <dbReference type="ChEBI" id="CHEBI:29108"/>
        <label>11</label>
    </ligand>
</feature>
<feature type="binding site" evidence="1">
    <location>
        <position position="427"/>
    </location>
    <ligand>
        <name>Ca(2+)</name>
        <dbReference type="ChEBI" id="CHEBI:29108"/>
        <label>9</label>
    </ligand>
</feature>
<feature type="binding site" evidence="1">
    <location>
        <position position="445"/>
    </location>
    <ligand>
        <name>Ca(2+)</name>
        <dbReference type="ChEBI" id="CHEBI:29108"/>
        <label>11</label>
    </ligand>
</feature>
<feature type="binding site" evidence="1">
    <location>
        <position position="446"/>
    </location>
    <ligand>
        <name>Ca(2+)</name>
        <dbReference type="ChEBI" id="CHEBI:29108"/>
        <label>11</label>
    </ligand>
</feature>
<feature type="binding site" evidence="1">
    <location>
        <position position="447"/>
    </location>
    <ligand>
        <name>Ca(2+)</name>
        <dbReference type="ChEBI" id="CHEBI:29108"/>
        <label>12</label>
    </ligand>
</feature>
<feature type="binding site" evidence="1">
    <location>
        <position position="448"/>
    </location>
    <ligand>
        <name>Ca(2+)</name>
        <dbReference type="ChEBI" id="CHEBI:29108"/>
        <label>10</label>
    </ligand>
</feature>
<feature type="binding site" evidence="1">
    <location>
        <position position="448"/>
    </location>
    <ligand>
        <name>Ca(2+)</name>
        <dbReference type="ChEBI" id="CHEBI:29108"/>
        <label>11</label>
    </ligand>
</feature>
<feature type="binding site" evidence="1">
    <location>
        <position position="449"/>
    </location>
    <ligand>
        <name>Ca(2+)</name>
        <dbReference type="ChEBI" id="CHEBI:29108"/>
        <label>12</label>
    </ligand>
</feature>
<feature type="binding site" evidence="1">
    <location>
        <position position="464"/>
    </location>
    <ligand>
        <name>Ca(2+)</name>
        <dbReference type="ChEBI" id="CHEBI:29108"/>
        <label>13</label>
    </ligand>
</feature>
<feature type="binding site" evidence="1">
    <location>
        <position position="464"/>
    </location>
    <ligand>
        <name>Ca(2+)</name>
        <dbReference type="ChEBI" id="CHEBI:29108"/>
        <label>14</label>
    </ligand>
</feature>
<feature type="binding site" evidence="1">
    <location>
        <position position="479"/>
    </location>
    <ligand>
        <name>Ca(2+)</name>
        <dbReference type="ChEBI" id="CHEBI:29108"/>
        <label>12</label>
    </ligand>
</feature>
<feature type="binding site" evidence="1">
    <location>
        <position position="481"/>
    </location>
    <ligand>
        <name>Ca(2+)</name>
        <dbReference type="ChEBI" id="CHEBI:29108"/>
        <label>11</label>
    </ligand>
</feature>
<feature type="binding site" evidence="1">
    <location>
        <position position="481"/>
    </location>
    <ligand>
        <name>Ca(2+)</name>
        <dbReference type="ChEBI" id="CHEBI:29108"/>
        <label>12</label>
    </ligand>
</feature>
<feature type="binding site" evidence="1">
    <location>
        <position position="485"/>
    </location>
    <ligand>
        <name>Ca(2+)</name>
        <dbReference type="ChEBI" id="CHEBI:29108"/>
        <label>12</label>
    </ligand>
</feature>
<feature type="binding site" evidence="1">
    <location>
        <position position="522"/>
    </location>
    <ligand>
        <name>Ca(2+)</name>
        <dbReference type="ChEBI" id="CHEBI:29108"/>
        <label>13</label>
    </ligand>
</feature>
<feature type="binding site" evidence="1">
    <location>
        <position position="524"/>
    </location>
    <ligand>
        <name>Ca(2+)</name>
        <dbReference type="ChEBI" id="CHEBI:29108"/>
        <label>13</label>
    </ligand>
</feature>
<feature type="binding site" evidence="1">
    <location>
        <position position="524"/>
    </location>
    <ligand>
        <name>Ca(2+)</name>
        <dbReference type="ChEBI" id="CHEBI:29108"/>
        <label>14</label>
    </ligand>
</feature>
<feature type="binding site" evidence="1">
    <location>
        <position position="537"/>
    </location>
    <ligand>
        <name>Ca(2+)</name>
        <dbReference type="ChEBI" id="CHEBI:29108"/>
        <label>12</label>
    </ligand>
</feature>
<feature type="binding site" evidence="1">
    <location>
        <position position="555"/>
    </location>
    <ligand>
        <name>Ca(2+)</name>
        <dbReference type="ChEBI" id="CHEBI:29108"/>
        <label>14</label>
    </ligand>
</feature>
<feature type="binding site" evidence="1">
    <location>
        <position position="556"/>
    </location>
    <ligand>
        <name>Ca(2+)</name>
        <dbReference type="ChEBI" id="CHEBI:29108"/>
        <label>14</label>
    </ligand>
</feature>
<feature type="binding site" evidence="1">
    <location>
        <position position="557"/>
    </location>
    <ligand>
        <name>Ca(2+)</name>
        <dbReference type="ChEBI" id="CHEBI:29108"/>
        <label>15</label>
    </ligand>
</feature>
<feature type="binding site" evidence="1">
    <location>
        <position position="558"/>
    </location>
    <ligand>
        <name>Ca(2+)</name>
        <dbReference type="ChEBI" id="CHEBI:29108"/>
        <label>13</label>
    </ligand>
</feature>
<feature type="binding site" evidence="1">
    <location>
        <position position="558"/>
    </location>
    <ligand>
        <name>Ca(2+)</name>
        <dbReference type="ChEBI" id="CHEBI:29108"/>
        <label>14</label>
    </ligand>
</feature>
<feature type="binding site" evidence="1">
    <location>
        <position position="559"/>
    </location>
    <ligand>
        <name>Ca(2+)</name>
        <dbReference type="ChEBI" id="CHEBI:29108"/>
        <label>13</label>
    </ligand>
</feature>
<feature type="binding site" evidence="1">
    <location>
        <position position="559"/>
    </location>
    <ligand>
        <name>Ca(2+)</name>
        <dbReference type="ChEBI" id="CHEBI:29108"/>
        <label>15</label>
    </ligand>
</feature>
<feature type="binding site" evidence="1">
    <location>
        <position position="594"/>
    </location>
    <ligand>
        <name>Ca(2+)</name>
        <dbReference type="ChEBI" id="CHEBI:29108"/>
        <label>15</label>
    </ligand>
</feature>
<feature type="binding site" evidence="1">
    <location>
        <position position="596"/>
    </location>
    <ligand>
        <name>Ca(2+)</name>
        <dbReference type="ChEBI" id="CHEBI:29108"/>
        <label>14</label>
    </ligand>
</feature>
<feature type="binding site" evidence="1">
    <location>
        <position position="596"/>
    </location>
    <ligand>
        <name>Ca(2+)</name>
        <dbReference type="ChEBI" id="CHEBI:29108"/>
        <label>15</label>
    </ligand>
</feature>
<feature type="binding site" evidence="1">
    <location>
        <position position="600"/>
    </location>
    <ligand>
        <name>Ca(2+)</name>
        <dbReference type="ChEBI" id="CHEBI:29108"/>
        <label>15</label>
    </ligand>
</feature>
<feature type="binding site" evidence="1">
    <location>
        <position position="646"/>
    </location>
    <ligand>
        <name>Ca(2+)</name>
        <dbReference type="ChEBI" id="CHEBI:29108"/>
        <label>15</label>
    </ligand>
</feature>
<feature type="glycosylation site" description="N-linked (GlcNAc...) asparagine" evidence="2">
    <location>
        <position position="261"/>
    </location>
</feature>
<feature type="glycosylation site" description="N-linked (GlcNAc...) asparagine" evidence="2">
    <location>
        <position position="420"/>
    </location>
</feature>
<feature type="glycosylation site" description="N-linked (GlcNAc...) asparagine" evidence="2">
    <location>
        <position position="485"/>
    </location>
</feature>
<feature type="glycosylation site" description="N-linked (GlcNAc...) asparagine" evidence="2">
    <location>
        <position position="546"/>
    </location>
</feature>
<feature type="glycosylation site" description="N-linked (GlcNAc...) asparagine" evidence="2">
    <location>
        <position position="570"/>
    </location>
</feature>
<feature type="glycosylation site" description="N-linked (GlcNAc...) asparagine" evidence="2">
    <location>
        <position position="676"/>
    </location>
</feature>
<feature type="disulfide bond" evidence="1">
    <location>
        <begin position="93"/>
        <end position="99"/>
    </location>
</feature>
<feature type="splice variant" id="VSP_015081" description="In isoform 2 and isoform 3." evidence="19 20">
    <location>
        <begin position="716"/>
        <end position="762"/>
    </location>
</feature>
<feature type="splice variant" id="VSP_054046" description="In isoform 3." evidence="21">
    <location>
        <position position="892"/>
    </location>
</feature>
<feature type="sequence variant" id="VAR_067472" description="In DEE9." evidence="13">
    <original>L</original>
    <variation>P</variation>
    <location>
        <position position="25"/>
    </location>
</feature>
<feature type="sequence variant" id="VAR_067473" description="In DEE9." evidence="14">
    <original>V</original>
    <variation>G</variation>
    <location>
        <position position="72"/>
    </location>
</feature>
<feature type="sequence variant" id="VAR_064840" description="In DEE9; dbSNP:rs1569316056." evidence="11">
    <original>L</original>
    <variation>R</variation>
    <location>
        <position position="81"/>
    </location>
</feature>
<feature type="sequence variant" id="VAR_064481" description="In DEE9; disease features overlapping with Dravet syndrome; dbSNP:rs796052795." evidence="7">
    <original>D</original>
    <variation>N</variation>
    <location>
        <position position="121"/>
    </location>
</feature>
<feature type="sequence variant" id="VAR_064841" description="In DEE9.">
    <original>A</original>
    <variation>ASEA</variation>
    <location>
        <position position="141"/>
    </location>
</feature>
<feature type="sequence variant" id="VAR_064842" description="In DEE9; dbSNP:rs796052799." evidence="11">
    <original>T</original>
    <variation>R</variation>
    <location>
        <position position="146"/>
    </location>
</feature>
<feature type="sequence variant" id="VAR_067474" description="In DEE9." evidence="15">
    <original>A</original>
    <variation>T</variation>
    <location>
        <position position="153"/>
    </location>
</feature>
<feature type="sequence variant" id="VAR_078722" description="In DEE9." evidence="16">
    <location>
        <begin position="158"/>
        <end position="1148"/>
    </location>
</feature>
<feature type="sequence variant" id="VAR_067475" description="In DEE9." evidence="15">
    <original>L</original>
    <variation>R</variation>
    <location>
        <position position="190"/>
    </location>
</feature>
<feature type="sequence variant" id="VAR_067476" description="In DEE9; dbSNP:rs753757730." evidence="14">
    <original>V</original>
    <variation>L</variation>
    <location>
        <position position="191"/>
    </location>
</feature>
<feature type="sequence variant" id="VAR_064482" description="In DEE9; disease features overlapping with Dravet syndrome." evidence="7">
    <original>E</original>
    <variation>Q</variation>
    <location>
        <position position="199"/>
    </location>
</feature>
<feature type="sequence variant" id="VAR_064483" description="In DEE9; associated in cis with Cys-206; disease features overlapping with Dravet syndrome." evidence="9">
    <original>H</original>
    <variation>P</variation>
    <location>
        <position position="203"/>
    </location>
</feature>
<feature type="sequence variant" id="VAR_064484" description="In DEE9; associated in cis with Pro-203; disease features overlapping with Dravet syndrome; dbSNP:rs746274631." evidence="9">
    <original>F</original>
    <variation>C</variation>
    <location>
        <position position="206"/>
    </location>
</feature>
<feature type="sequence variant" id="VAR_064843" description="In DEE9." evidence="11">
    <original>F</original>
    <variation>Y</variation>
    <location>
        <position position="206"/>
    </location>
</feature>
<feature type="sequence variant" id="VAR_078723" description="In DEE9; uncertain significance; dbSNP:rs1928439241." evidence="17">
    <original>D</original>
    <variation>N</variation>
    <location>
        <position position="230"/>
    </location>
</feature>
<feature type="sequence variant" id="VAR_067477" description="In DEE9; dbSNP:rs587784299." evidence="15">
    <original>N</original>
    <variation>S</variation>
    <location>
        <position position="232"/>
    </location>
</feature>
<feature type="sequence variant" id="VAR_067478" description="In DEE9; dbSNP:rs1555985475." evidence="15">
    <original>N</original>
    <variation>S</variation>
    <location>
        <position position="234"/>
    </location>
</feature>
<feature type="sequence variant" id="VAR_078724" description="In DEE9; dbSNP:rs1060502176." evidence="17">
    <original>P</original>
    <variation>L</variation>
    <location>
        <position position="236"/>
    </location>
</feature>
<feature type="sequence variant" id="VAR_067479" description="In DEE9; dbSNP:rs1928437614." evidence="12">
    <original>P</original>
    <variation>S</variation>
    <location>
        <position position="236"/>
    </location>
</feature>
<feature type="sequence variant" id="VAR_064844" description="In DEE9; dbSNP:rs2147540748." evidence="11">
    <original>E</original>
    <variation>D</variation>
    <location>
        <position position="249"/>
    </location>
</feature>
<feature type="sequence variant" id="VAR_067480" description="In DEE9; dbSNP:rs1555985448." evidence="15">
    <original>A</original>
    <variation>D</variation>
    <location>
        <position position="262"/>
    </location>
</feature>
<feature type="sequence variant" id="VAR_064485" description="In DEE9." evidence="8">
    <original>S</original>
    <variation>P</variation>
    <location>
        <position position="276"/>
    </location>
</feature>
<feature type="sequence variant" id="VAR_064486" description="In DEE9; disease features overlapping with Dravet syndrome; dbSNP:rs796052839." evidence="7 9 12 13 14">
    <original>N</original>
    <variation>S</variation>
    <location>
        <position position="340"/>
    </location>
</feature>
<feature type="sequence variant" id="VAR_064845" description="In DEE9." evidence="11">
    <original>D</original>
    <variation>E</variation>
    <location>
        <position position="341"/>
    </location>
</feature>
<feature type="sequence variant" id="VAR_067481" description="In DEE9; dbSNP:rs796052811." evidence="15">
    <original>P</original>
    <variation>R</variation>
    <location>
        <position position="344"/>
    </location>
</feature>
<feature type="sequence variant" id="VAR_067482" description="In DEE9." evidence="15">
    <original>D</original>
    <variation>E</variation>
    <location>
        <position position="377"/>
    </location>
</feature>
<feature type="sequence variant" id="VAR_064487" description="In DEE9; disease features overlapping with Dravet syndrome; dbSNP:rs1928407149." evidence="9">
    <original>D</original>
    <variation>H</variation>
    <location>
        <position position="377"/>
    </location>
</feature>
<feature type="sequence variant" id="VAR_064488" description="In DEE9; disease features overlapping with Dravet syndrome; dbSNP:rs2147539327." evidence="9">
    <original>T</original>
    <variation>I</variation>
    <location>
        <position position="404"/>
    </location>
</feature>
<feature type="sequence variant" id="VAR_064489" description="In DEE9; disease features overlapping with Dravet syndrome." evidence="9">
    <original>E</original>
    <variation>Q</variation>
    <location>
        <position position="414"/>
    </location>
</feature>
<feature type="sequence variant" id="VAR_067483" description="In DEE9." evidence="12">
    <original>L</original>
    <variation>P</variation>
    <location>
        <position position="433"/>
    </location>
</feature>
<feature type="sequence variant" id="VAR_046484" description="In DEE9; dbSNP:rs132630323." evidence="6">
    <original>V</original>
    <variation>E</variation>
    <location>
        <position position="441"/>
    </location>
</feature>
<feature type="sequence variant" id="VAR_078227" description="Found in a patient with drug-resistant epilepsy; likely pathogenic." evidence="18">
    <original>N</original>
    <variation>H</variation>
    <location>
        <position position="447"/>
    </location>
</feature>
<feature type="sequence variant" id="VAR_067484" description="In DEE9." evidence="12">
    <original>G</original>
    <variation>R</variation>
    <location>
        <position position="513"/>
    </location>
</feature>
<feature type="sequence variant" id="VAR_064490" description="In DEE9; disease features overlapping with Dravet syndrome." evidence="7">
    <original>L</original>
    <variation>P</variation>
    <location>
        <position position="543"/>
    </location>
</feature>
<feature type="sequence variant" id="VAR_046485" description="In DEE9; dbSNP:rs267606933." evidence="6 8">
    <original>N</original>
    <variation>K</variation>
    <location>
        <position position="557"/>
    </location>
</feature>
<feature type="sequence variant" id="VAR_064846" description="In DEE9; dbSNP:rs796052819." evidence="11">
    <original>P</original>
    <variation>R</variation>
    <location>
        <position position="561"/>
    </location>
</feature>
<feature type="sequence variant" id="VAR_064847" description="In DEE9; dbSNP:rs201989363." evidence="11">
    <original>P</original>
    <variation>L</variation>
    <location>
        <position position="567"/>
    </location>
</feature>
<feature type="sequence variant" id="VAR_064848" description="In DEE9; dbSNP:rs1928363313." evidence="11">
    <original>D</original>
    <variation>N</variation>
    <location>
        <position position="618"/>
    </location>
</feature>
<feature type="sequence variant" id="VAR_067485" description="In DEE9; dbSNP:rs1221643775." evidence="15">
    <original>V</original>
    <variation>M</variation>
    <location>
        <position position="642"/>
    </location>
</feature>
<feature type="sequence variant" id="VAR_064491" description="In dbSNP:rs748581653." evidence="8">
    <original>R</original>
    <variation>Q</variation>
    <location>
        <position position="958"/>
    </location>
</feature>
<feature type="sequence variant" id="VAR_067486" description="In dbSNP:rs3764758." evidence="15">
    <original>R</original>
    <variation>C</variation>
    <location>
        <position position="980"/>
    </location>
</feature>
<feature type="sequence variant" id="VAR_067487" description="In dbSNP:rs184545774." evidence="15">
    <original>L</original>
    <variation>V</variation>
    <location>
        <position position="1094"/>
    </location>
</feature>
<feature type="sequence variant" id="VAR_064492" description="In dbSNP:rs191333060." evidence="7 8">
    <original>R</original>
    <variation>G</variation>
    <location>
        <position position="1107"/>
    </location>
</feature>
<feature type="sequence variant" id="VAR_067488" description="In dbSNP:rs200021840." evidence="14">
    <original>R</original>
    <variation>H</variation>
    <location>
        <position position="1107"/>
    </location>
</feature>
<feature type="sequence variant" id="VAR_067489" description="In dbSNP:rs141816797." evidence="14 15">
    <original>N</original>
    <variation>H</variation>
    <location>
        <position position="1134"/>
    </location>
</feature>
<feature type="sequence conflict" description="In Ref. 3; CAH18133." evidence="21" ref="3">
    <original>V</original>
    <variation>A</variation>
    <location>
        <position position="868"/>
    </location>
</feature>
<feature type="strand" evidence="22">
    <location>
        <begin position="23"/>
        <end position="32"/>
    </location>
</feature>
<feature type="strand" evidence="22">
    <location>
        <begin position="38"/>
        <end position="40"/>
    </location>
</feature>
<feature type="helix" evidence="22">
    <location>
        <begin position="42"/>
        <end position="49"/>
    </location>
</feature>
<feature type="strand" evidence="22">
    <location>
        <begin position="61"/>
        <end position="67"/>
    </location>
</feature>
<feature type="turn" evidence="22">
    <location>
        <begin position="69"/>
        <end position="71"/>
    </location>
</feature>
<feature type="strand" evidence="22">
    <location>
        <begin position="72"/>
        <end position="74"/>
    </location>
</feature>
<feature type="turn" evidence="22">
    <location>
        <begin position="76"/>
        <end position="78"/>
    </location>
</feature>
<feature type="strand" evidence="22">
    <location>
        <begin position="81"/>
        <end position="85"/>
    </location>
</feature>
<feature type="helix" evidence="22">
    <location>
        <begin position="89"/>
        <end position="92"/>
    </location>
</feature>
<feature type="strand" evidence="22">
    <location>
        <begin position="100"/>
        <end position="107"/>
    </location>
</feature>
<feature type="strand" evidence="22">
    <location>
        <begin position="112"/>
        <end position="120"/>
    </location>
</feature>
<feature type="strand" evidence="22">
    <location>
        <begin position="130"/>
        <end position="139"/>
    </location>
</feature>
<feature type="strand" evidence="22">
    <location>
        <begin position="147"/>
        <end position="149"/>
    </location>
</feature>
<feature type="helix" evidence="22">
    <location>
        <begin position="159"/>
        <end position="161"/>
    </location>
</feature>
<feature type="strand" evidence="22">
    <location>
        <begin position="162"/>
        <end position="168"/>
    </location>
</feature>
<feature type="strand" evidence="22">
    <location>
        <begin position="172"/>
        <end position="184"/>
    </location>
</feature>
<feature type="strand" evidence="22">
    <location>
        <begin position="186"/>
        <end position="192"/>
    </location>
</feature>
<feature type="turn" evidence="22">
    <location>
        <begin position="198"/>
        <end position="200"/>
    </location>
</feature>
<feature type="strand" evidence="22">
    <location>
        <begin position="203"/>
        <end position="212"/>
    </location>
</feature>
<feature type="strand" evidence="22">
    <location>
        <begin position="219"/>
        <end position="229"/>
    </location>
</feature>
<feature type="strand" evidence="22">
    <location>
        <begin position="237"/>
        <end position="239"/>
    </location>
</feature>
<feature type="strand" evidence="22">
    <location>
        <begin position="241"/>
        <end position="248"/>
    </location>
</feature>
<feature type="strand" evidence="22">
    <location>
        <begin position="253"/>
        <end position="259"/>
    </location>
</feature>
<feature type="helix" evidence="22">
    <location>
        <begin position="268"/>
        <end position="271"/>
    </location>
</feature>
<feature type="strand" evidence="22">
    <location>
        <begin position="273"/>
        <end position="277"/>
    </location>
</feature>
<feature type="helix" evidence="22">
    <location>
        <begin position="284"/>
        <end position="288"/>
    </location>
</feature>
<feature type="strand" evidence="22">
    <location>
        <begin position="289"/>
        <end position="291"/>
    </location>
</feature>
<feature type="turn" evidence="22">
    <location>
        <begin position="293"/>
        <end position="295"/>
    </location>
</feature>
<feature type="strand" evidence="22">
    <location>
        <begin position="297"/>
        <end position="300"/>
    </location>
</feature>
<feature type="turn" evidence="22">
    <location>
        <begin position="306"/>
        <end position="308"/>
    </location>
</feature>
<feature type="strand" evidence="22">
    <location>
        <begin position="310"/>
        <end position="324"/>
    </location>
</feature>
<feature type="strand" evidence="22">
    <location>
        <begin position="328"/>
        <end position="337"/>
    </location>
</feature>
<feature type="strand" evidence="22">
    <location>
        <begin position="345"/>
        <end position="349"/>
    </location>
</feature>
<feature type="strand" evidence="22">
    <location>
        <begin position="356"/>
        <end position="361"/>
    </location>
</feature>
<feature type="strand" evidence="22">
    <location>
        <begin position="367"/>
        <end position="374"/>
    </location>
</feature>
<feature type="helix" evidence="22">
    <location>
        <begin position="379"/>
        <end position="381"/>
    </location>
</feature>
<feature type="strand" evidence="22">
    <location>
        <begin position="384"/>
        <end position="388"/>
    </location>
</feature>
<feature type="strand" evidence="22">
    <location>
        <begin position="393"/>
        <end position="399"/>
    </location>
</feature>
<feature type="strand" evidence="22">
    <location>
        <begin position="402"/>
        <end position="407"/>
    </location>
</feature>
<feature type="turn" evidence="22">
    <location>
        <begin position="413"/>
        <end position="415"/>
    </location>
</feature>
<feature type="strand" evidence="22">
    <location>
        <begin position="417"/>
        <end position="431"/>
    </location>
</feature>
<feature type="strand" evidence="22">
    <location>
        <begin position="434"/>
        <end position="445"/>
    </location>
</feature>
<gene>
    <name type="primary">PCDH19</name>
    <name type="synonym">KIAA1313</name>
</gene>
<evidence type="ECO:0000250" key="1">
    <source>
        <dbReference type="UniProtKB" id="F8W3X3"/>
    </source>
</evidence>
<evidence type="ECO:0000255" key="2"/>
<evidence type="ECO:0000255" key="3">
    <source>
        <dbReference type="PROSITE-ProRule" id="PRU00043"/>
    </source>
</evidence>
<evidence type="ECO:0000256" key="4">
    <source>
        <dbReference type="SAM" id="MobiDB-lite"/>
    </source>
</evidence>
<evidence type="ECO:0000269" key="5">
    <source>
    </source>
</evidence>
<evidence type="ECO:0000269" key="6">
    <source>
    </source>
</evidence>
<evidence type="ECO:0000269" key="7">
    <source>
    </source>
</evidence>
<evidence type="ECO:0000269" key="8">
    <source>
    </source>
</evidence>
<evidence type="ECO:0000269" key="9">
    <source>
    </source>
</evidence>
<evidence type="ECO:0000269" key="10">
    <source>
    </source>
</evidence>
<evidence type="ECO:0000269" key="11">
    <source>
    </source>
</evidence>
<evidence type="ECO:0000269" key="12">
    <source>
    </source>
</evidence>
<evidence type="ECO:0000269" key="13">
    <source>
    </source>
</evidence>
<evidence type="ECO:0000269" key="14">
    <source>
    </source>
</evidence>
<evidence type="ECO:0000269" key="15">
    <source>
    </source>
</evidence>
<evidence type="ECO:0000269" key="16">
    <source>
    </source>
</evidence>
<evidence type="ECO:0000269" key="17">
    <source>
    </source>
</evidence>
<evidence type="ECO:0000269" key="18">
    <source>
    </source>
</evidence>
<evidence type="ECO:0000303" key="19">
    <source>
    </source>
</evidence>
<evidence type="ECO:0000303" key="20">
    <source>
    </source>
</evidence>
<evidence type="ECO:0000305" key="21"/>
<evidence type="ECO:0007829" key="22">
    <source>
        <dbReference type="PDB" id="6VFU"/>
    </source>
</evidence>
<comment type="function">
    <text evidence="1">Calcium-dependent cell-adhesion protein.</text>
</comment>
<comment type="subunit">
    <text evidence="1">Homodimer; antiparallel.</text>
</comment>
<comment type="subcellular location">
    <subcellularLocation>
        <location evidence="1">Cell membrane</location>
        <topology evidence="2">Single-pass type I membrane protein</topology>
    </subcellularLocation>
</comment>
<comment type="alternative products">
    <event type="alternative splicing"/>
    <isoform>
        <id>Q8TAB3-1</id>
        <name>1</name>
        <sequence type="displayed"/>
    </isoform>
    <isoform>
        <id>Q8TAB3-2</id>
        <name>2</name>
        <sequence type="described" ref="VSP_015081"/>
    </isoform>
    <isoform>
        <id>Q8TAB3-3</id>
        <name>3</name>
        <sequence type="described" ref="VSP_015081 VSP_054046"/>
    </isoform>
</comment>
<comment type="tissue specificity">
    <text evidence="5 6">Moderately expressed in all regions of the brain examined, with lowest levels found in the cerebellum. Moderate expression is also found in ovary, and low expression in all other tissues tested. Also detected in primary skin fibroblast.</text>
</comment>
<comment type="developmental stage">
    <text evidence="6">Expressed in developing cortical plate, amygdala and subcortical regions and in the ganglionic eminence.</text>
</comment>
<comment type="disease" evidence="6 7 8 9 10 11 12 13 14 15 16 17">
    <disease id="DI-01533">
        <name>Developmental and epileptic encephalopathy 9</name>
        <acronym>DEE9</acronym>
        <description>A condition characterized by seizure with onset in infancy or early childhood, cognitive impairment, and delayed development of variable severity in some patients. Additional features include autistic signs and psychosis. The disorder is sex-limited, with the phenotype being restricted to females.</description>
        <dbReference type="MIM" id="300088"/>
    </disease>
    <text>The disease is caused by variants affecting the gene represented in this entry.</text>
</comment>
<comment type="sequence caution" evidence="21">
    <conflict type="erroneous initiation">
        <sequence resource="EMBL-CDS" id="CAH18133"/>
    </conflict>
    <text>Truncated N-terminus.</text>
</comment>
<comment type="online information" name="X-chromosome gene database Protocadherin 19 (PCDH19)">
    <link uri="https://databases.lovd.nl/shared/genes/PCDH19"/>
    <text>Leiden Open Variation Database (LOVD)</text>
</comment>
<reference key="1">
    <citation type="journal article" date="2008" name="Nat. Genet.">
        <title>X-linked protocadherin 19 mutations cause female-limited epilepsy and cognitive impairment.</title>
        <authorList>
            <person name="Dibbens L.M."/>
            <person name="Tarpey P.S."/>
            <person name="Hynes K."/>
            <person name="Bayly M.A."/>
            <person name="Scheffer I.E."/>
            <person name="Smith R."/>
            <person name="Bomar J."/>
            <person name="Sutton E."/>
            <person name="Vandeleur L."/>
            <person name="Shoubridge C."/>
            <person name="Edkins S."/>
            <person name="Turner S.J."/>
            <person name="Stevens C."/>
            <person name="O'Meara S."/>
            <person name="Tofts C."/>
            <person name="Barthorpe S."/>
            <person name="Buck G."/>
            <person name="Cole J."/>
            <person name="Halliday K."/>
            <person name="Jones D."/>
            <person name="Lee R."/>
            <person name="Madison M."/>
            <person name="Mironenko T."/>
            <person name="Varian J."/>
            <person name="West S."/>
            <person name="Widaa S."/>
            <person name="Wray P."/>
            <person name="Teague J."/>
            <person name="Dicks E."/>
            <person name="Butler A."/>
            <person name="Menzies A."/>
            <person name="Jenkinson A."/>
            <person name="Shepherd R."/>
            <person name="Gusella J.F."/>
            <person name="Afawi Z."/>
            <person name="Mazarib A."/>
            <person name="Neufeld M.Y."/>
            <person name="Kivity S."/>
            <person name="Lev D."/>
            <person name="Lerman-Sagie T."/>
            <person name="Korczyn A.D."/>
            <person name="Derry C.P."/>
            <person name="Sutherland G.R."/>
            <person name="Friend K."/>
            <person name="Shaw M."/>
            <person name="Corbett M."/>
            <person name="Kim H.-G."/>
            <person name="Geschwind D.H."/>
            <person name="Thomas P."/>
            <person name="Haan E."/>
            <person name="Ryan S."/>
            <person name="McKee S."/>
            <person name="Berkovic S.F."/>
            <person name="Futreal P.A."/>
            <person name="Stratton M.R."/>
            <person name="Mulley J.C."/>
            <person name="Gecz J."/>
        </authorList>
    </citation>
    <scope>NUCLEOTIDE SEQUENCE [MRNA] (ISOFORM 1)</scope>
    <scope>TISSUE SPECIFICITY</scope>
    <scope>DEVELOPMENTAL STAGE</scope>
    <scope>VARIANTS DEE9 GLU-441 AND LYS-557</scope>
</reference>
<reference key="2">
    <citation type="journal article" date="2005" name="Nature">
        <title>The DNA sequence of the human X chromosome.</title>
        <authorList>
            <person name="Ross M.T."/>
            <person name="Grafham D.V."/>
            <person name="Coffey A.J."/>
            <person name="Scherer S."/>
            <person name="McLay K."/>
            <person name="Muzny D."/>
            <person name="Platzer M."/>
            <person name="Howell G.R."/>
            <person name="Burrows C."/>
            <person name="Bird C.P."/>
            <person name="Frankish A."/>
            <person name="Lovell F.L."/>
            <person name="Howe K.L."/>
            <person name="Ashurst J.L."/>
            <person name="Fulton R.S."/>
            <person name="Sudbrak R."/>
            <person name="Wen G."/>
            <person name="Jones M.C."/>
            <person name="Hurles M.E."/>
            <person name="Andrews T.D."/>
            <person name="Scott C.E."/>
            <person name="Searle S."/>
            <person name="Ramser J."/>
            <person name="Whittaker A."/>
            <person name="Deadman R."/>
            <person name="Carter N.P."/>
            <person name="Hunt S.E."/>
            <person name="Chen R."/>
            <person name="Cree A."/>
            <person name="Gunaratne P."/>
            <person name="Havlak P."/>
            <person name="Hodgson A."/>
            <person name="Metzker M.L."/>
            <person name="Richards S."/>
            <person name="Scott G."/>
            <person name="Steffen D."/>
            <person name="Sodergren E."/>
            <person name="Wheeler D.A."/>
            <person name="Worley K.C."/>
            <person name="Ainscough R."/>
            <person name="Ambrose K.D."/>
            <person name="Ansari-Lari M.A."/>
            <person name="Aradhya S."/>
            <person name="Ashwell R.I."/>
            <person name="Babbage A.K."/>
            <person name="Bagguley C.L."/>
            <person name="Ballabio A."/>
            <person name="Banerjee R."/>
            <person name="Barker G.E."/>
            <person name="Barlow K.F."/>
            <person name="Barrett I.P."/>
            <person name="Bates K.N."/>
            <person name="Beare D.M."/>
            <person name="Beasley H."/>
            <person name="Beasley O."/>
            <person name="Beck A."/>
            <person name="Bethel G."/>
            <person name="Blechschmidt K."/>
            <person name="Brady N."/>
            <person name="Bray-Allen S."/>
            <person name="Bridgeman A.M."/>
            <person name="Brown A.J."/>
            <person name="Brown M.J."/>
            <person name="Bonnin D."/>
            <person name="Bruford E.A."/>
            <person name="Buhay C."/>
            <person name="Burch P."/>
            <person name="Burford D."/>
            <person name="Burgess J."/>
            <person name="Burrill W."/>
            <person name="Burton J."/>
            <person name="Bye J.M."/>
            <person name="Carder C."/>
            <person name="Carrel L."/>
            <person name="Chako J."/>
            <person name="Chapman J.C."/>
            <person name="Chavez D."/>
            <person name="Chen E."/>
            <person name="Chen G."/>
            <person name="Chen Y."/>
            <person name="Chen Z."/>
            <person name="Chinault C."/>
            <person name="Ciccodicola A."/>
            <person name="Clark S.Y."/>
            <person name="Clarke G."/>
            <person name="Clee C.M."/>
            <person name="Clegg S."/>
            <person name="Clerc-Blankenburg K."/>
            <person name="Clifford K."/>
            <person name="Cobley V."/>
            <person name="Cole C.G."/>
            <person name="Conquer J.S."/>
            <person name="Corby N."/>
            <person name="Connor R.E."/>
            <person name="David R."/>
            <person name="Davies J."/>
            <person name="Davis C."/>
            <person name="Davis J."/>
            <person name="Delgado O."/>
            <person name="Deshazo D."/>
            <person name="Dhami P."/>
            <person name="Ding Y."/>
            <person name="Dinh H."/>
            <person name="Dodsworth S."/>
            <person name="Draper H."/>
            <person name="Dugan-Rocha S."/>
            <person name="Dunham A."/>
            <person name="Dunn M."/>
            <person name="Durbin K.J."/>
            <person name="Dutta I."/>
            <person name="Eades T."/>
            <person name="Ellwood M."/>
            <person name="Emery-Cohen A."/>
            <person name="Errington H."/>
            <person name="Evans K.L."/>
            <person name="Faulkner L."/>
            <person name="Francis F."/>
            <person name="Frankland J."/>
            <person name="Fraser A.E."/>
            <person name="Galgoczy P."/>
            <person name="Gilbert J."/>
            <person name="Gill R."/>
            <person name="Gloeckner G."/>
            <person name="Gregory S.G."/>
            <person name="Gribble S."/>
            <person name="Griffiths C."/>
            <person name="Grocock R."/>
            <person name="Gu Y."/>
            <person name="Gwilliam R."/>
            <person name="Hamilton C."/>
            <person name="Hart E.A."/>
            <person name="Hawes A."/>
            <person name="Heath P.D."/>
            <person name="Heitmann K."/>
            <person name="Hennig S."/>
            <person name="Hernandez J."/>
            <person name="Hinzmann B."/>
            <person name="Ho S."/>
            <person name="Hoffs M."/>
            <person name="Howden P.J."/>
            <person name="Huckle E.J."/>
            <person name="Hume J."/>
            <person name="Hunt P.J."/>
            <person name="Hunt A.R."/>
            <person name="Isherwood J."/>
            <person name="Jacob L."/>
            <person name="Johnson D."/>
            <person name="Jones S."/>
            <person name="de Jong P.J."/>
            <person name="Joseph S.S."/>
            <person name="Keenan S."/>
            <person name="Kelly S."/>
            <person name="Kershaw J.K."/>
            <person name="Khan Z."/>
            <person name="Kioschis P."/>
            <person name="Klages S."/>
            <person name="Knights A.J."/>
            <person name="Kosiura A."/>
            <person name="Kovar-Smith C."/>
            <person name="Laird G.K."/>
            <person name="Langford C."/>
            <person name="Lawlor S."/>
            <person name="Leversha M."/>
            <person name="Lewis L."/>
            <person name="Liu W."/>
            <person name="Lloyd C."/>
            <person name="Lloyd D.M."/>
            <person name="Loulseged H."/>
            <person name="Loveland J.E."/>
            <person name="Lovell J.D."/>
            <person name="Lozado R."/>
            <person name="Lu J."/>
            <person name="Lyne R."/>
            <person name="Ma J."/>
            <person name="Maheshwari M."/>
            <person name="Matthews L.H."/>
            <person name="McDowall J."/>
            <person name="McLaren S."/>
            <person name="McMurray A."/>
            <person name="Meidl P."/>
            <person name="Meitinger T."/>
            <person name="Milne S."/>
            <person name="Miner G."/>
            <person name="Mistry S.L."/>
            <person name="Morgan M."/>
            <person name="Morris S."/>
            <person name="Mueller I."/>
            <person name="Mullikin J.C."/>
            <person name="Nguyen N."/>
            <person name="Nordsiek G."/>
            <person name="Nyakatura G."/>
            <person name="O'dell C.N."/>
            <person name="Okwuonu G."/>
            <person name="Palmer S."/>
            <person name="Pandian R."/>
            <person name="Parker D."/>
            <person name="Parrish J."/>
            <person name="Pasternak S."/>
            <person name="Patel D."/>
            <person name="Pearce A.V."/>
            <person name="Pearson D.M."/>
            <person name="Pelan S.E."/>
            <person name="Perez L."/>
            <person name="Porter K.M."/>
            <person name="Ramsey Y."/>
            <person name="Reichwald K."/>
            <person name="Rhodes S."/>
            <person name="Ridler K.A."/>
            <person name="Schlessinger D."/>
            <person name="Schueler M.G."/>
            <person name="Sehra H.K."/>
            <person name="Shaw-Smith C."/>
            <person name="Shen H."/>
            <person name="Sheridan E.M."/>
            <person name="Shownkeen R."/>
            <person name="Skuce C.D."/>
            <person name="Smith M.L."/>
            <person name="Sotheran E.C."/>
            <person name="Steingruber H.E."/>
            <person name="Steward C.A."/>
            <person name="Storey R."/>
            <person name="Swann R.M."/>
            <person name="Swarbreck D."/>
            <person name="Tabor P.E."/>
            <person name="Taudien S."/>
            <person name="Taylor T."/>
            <person name="Teague B."/>
            <person name="Thomas K."/>
            <person name="Thorpe A."/>
            <person name="Timms K."/>
            <person name="Tracey A."/>
            <person name="Trevanion S."/>
            <person name="Tromans A.C."/>
            <person name="d'Urso M."/>
            <person name="Verduzco D."/>
            <person name="Villasana D."/>
            <person name="Waldron L."/>
            <person name="Wall M."/>
            <person name="Wang Q."/>
            <person name="Warren J."/>
            <person name="Warry G.L."/>
            <person name="Wei X."/>
            <person name="West A."/>
            <person name="Whitehead S.L."/>
            <person name="Whiteley M.N."/>
            <person name="Wilkinson J.E."/>
            <person name="Willey D.L."/>
            <person name="Williams G."/>
            <person name="Williams L."/>
            <person name="Williamson A."/>
            <person name="Williamson H."/>
            <person name="Wilming L."/>
            <person name="Woodmansey R.L."/>
            <person name="Wray P.W."/>
            <person name="Yen J."/>
            <person name="Zhang J."/>
            <person name="Zhou J."/>
            <person name="Zoghbi H."/>
            <person name="Zorilla S."/>
            <person name="Buck D."/>
            <person name="Reinhardt R."/>
            <person name="Poustka A."/>
            <person name="Rosenthal A."/>
            <person name="Lehrach H."/>
            <person name="Meindl A."/>
            <person name="Minx P.J."/>
            <person name="Hillier L.W."/>
            <person name="Willard H.F."/>
            <person name="Wilson R.K."/>
            <person name="Waterston R.H."/>
            <person name="Rice C.M."/>
            <person name="Vaudin M."/>
            <person name="Coulson A."/>
            <person name="Nelson D.L."/>
            <person name="Weinstock G."/>
            <person name="Sulston J.E."/>
            <person name="Durbin R.M."/>
            <person name="Hubbard T."/>
            <person name="Gibbs R.A."/>
            <person name="Beck S."/>
            <person name="Rogers J."/>
            <person name="Bentley D.R."/>
        </authorList>
    </citation>
    <scope>NUCLEOTIDE SEQUENCE [LARGE SCALE GENOMIC DNA]</scope>
</reference>
<reference key="3">
    <citation type="journal article" date="2007" name="BMC Genomics">
        <title>The full-ORF clone resource of the German cDNA consortium.</title>
        <authorList>
            <person name="Bechtel S."/>
            <person name="Rosenfelder H."/>
            <person name="Duda A."/>
            <person name="Schmidt C.P."/>
            <person name="Ernst U."/>
            <person name="Wellenreuther R."/>
            <person name="Mehrle A."/>
            <person name="Schuster C."/>
            <person name="Bahr A."/>
            <person name="Bloecker H."/>
            <person name="Heubner D."/>
            <person name="Hoerlein A."/>
            <person name="Michel G."/>
            <person name="Wedler H."/>
            <person name="Koehrer K."/>
            <person name="Ottenwaelder B."/>
            <person name="Poustka A."/>
            <person name="Wiemann S."/>
            <person name="Schupp I."/>
        </authorList>
    </citation>
    <scope>NUCLEOTIDE SEQUENCE [LARGE SCALE MRNA] OF 482-1148 (ISOFORM 2)</scope>
    <source>
        <tissue>Amygdala</tissue>
    </source>
</reference>
<reference key="4">
    <citation type="journal article" date="2000" name="DNA Res.">
        <title>Prediction of the coding sequences of unidentified human genes. XVI. The complete sequences of 150 new cDNA clones from brain which code for large proteins in vitro.</title>
        <authorList>
            <person name="Nagase T."/>
            <person name="Kikuno R."/>
            <person name="Ishikawa K."/>
            <person name="Hirosawa M."/>
            <person name="Ohara O."/>
        </authorList>
    </citation>
    <scope>NUCLEOTIDE SEQUENCE [LARGE SCALE MRNA] OF 704-1148 (ISOFORM 2)</scope>
    <source>
        <tissue>Brain</tissue>
    </source>
</reference>
<reference key="5">
    <citation type="journal article" date="2001" name="Genomics">
        <title>Identification and characterization of three members of a novel subclass of protocadherins.</title>
        <authorList>
            <person name="Wolverton T."/>
            <person name="Lalande M."/>
        </authorList>
    </citation>
    <scope>GENE STRUCTURE</scope>
    <scope>TISSUE SPECIFICITY</scope>
</reference>
<reference key="6">
    <citation type="journal article" date="2010" name="Am. J. Med. Genet. A">
        <title>Novel de novo PCDH19 mutations in three unrelated females with epilepsy female restricted mental retardation syndrome.</title>
        <authorList>
            <person name="Jamal S.M."/>
            <person name="Basran R.K."/>
            <person name="Newton S."/>
            <person name="Wang Z."/>
            <person name="Milunsky J.M."/>
        </authorList>
    </citation>
    <scope>INVOLVEMENT IN DEE9</scope>
</reference>
<reference key="7">
    <citation type="journal article" date="2009" name="PLoS Genet.">
        <title>Sporadic infantile epileptic encephalopathy caused by mutations in PCDH19 resembles Dravet syndrome but mainly affects females.</title>
        <authorList>
            <person name="Depienne C."/>
            <person name="Bouteiller D."/>
            <person name="Keren B."/>
            <person name="Cheuret E."/>
            <person name="Poirier K."/>
            <person name="Trouillard O."/>
            <person name="Benyahia B."/>
            <person name="Quelin C."/>
            <person name="Carpentier W."/>
            <person name="Julia S."/>
            <person name="Afenjar A."/>
            <person name="Gautier A."/>
            <person name="Rivier F."/>
            <person name="Meyer S."/>
            <person name="Berquin P."/>
            <person name="Helias M."/>
            <person name="Py I."/>
            <person name="Rivera S."/>
            <person name="Bahi-Buisson N."/>
            <person name="Gourfinkel-An I."/>
            <person name="Cazeneuve C."/>
            <person name="Ruberg M."/>
            <person name="Brice A."/>
            <person name="Nabbout R."/>
            <person name="Leguern E."/>
        </authorList>
    </citation>
    <scope>VARIANTS DEE9 ASN-121; GLN-199; SER-340 AND PRO-543</scope>
    <scope>VARIANT GLY-1107</scope>
</reference>
<reference key="8">
    <citation type="journal article" date="2010" name="J. Med. Genet.">
        <title>Epilepsy and mental retardation limited to females with PCDH19 mutations can present de novo or in single generation families.</title>
        <authorList>
            <person name="Hynes K."/>
            <person name="Tarpey P."/>
            <person name="Dibbens L.M."/>
            <person name="Bayly M.A."/>
            <person name="Berkovic S.F."/>
            <person name="Smith R."/>
            <person name="Raisi Z.A."/>
            <person name="Turner S.J."/>
            <person name="Brown N.J."/>
            <person name="Desai T.D."/>
            <person name="Haan E."/>
            <person name="Turner G."/>
            <person name="Christodoulou J."/>
            <person name="Leonard H."/>
            <person name="Gill D."/>
            <person name="Stratton M.R."/>
            <person name="Gecz J."/>
            <person name="Scheffer I.E."/>
        </authorList>
    </citation>
    <scope>VARIANTS DEE9 PRO-276 AND LYS-557</scope>
    <scope>VARIANTS GLN-958 AND GLY-1107</scope>
</reference>
<reference key="9">
    <citation type="journal article" date="2010" name="Neurology">
        <title>Protocadherin 19 mutations in girls with infantile-onset epilepsy.</title>
        <authorList>
            <person name="Marini C."/>
            <person name="Mei D."/>
            <person name="Parmeggiani L."/>
            <person name="Norci V."/>
            <person name="Calado E."/>
            <person name="Ferrari A."/>
            <person name="Moreira A."/>
            <person name="Pisano T."/>
            <person name="Specchio N."/>
            <person name="Vigevano F."/>
            <person name="Battaglia D."/>
            <person name="Guerrini R."/>
        </authorList>
    </citation>
    <scope>VARIANTS DEE9 PRO-203; CYS-206; SER-340; HIS-377; ILE-404 AND GLN-414</scope>
</reference>
<reference key="10">
    <citation type="journal article" date="2011" name="Epilepsia">
        <title>Spectrum of phenotypes in female patients with epilepsy due to protocadherin 19 mutations.</title>
        <authorList>
            <person name="Specchio N."/>
            <person name="Marini C."/>
            <person name="Terracciano A."/>
            <person name="Mei D."/>
            <person name="Trivisano M."/>
            <person name="Sicca F."/>
            <person name="Fusco L."/>
            <person name="Cusmai R."/>
            <person name="Darra F."/>
            <person name="Bernardina B.D."/>
            <person name="Bertini E."/>
            <person name="Guerrini R."/>
            <person name="Vigevano F."/>
        </authorList>
    </citation>
    <scope>VARIANTS DEE9 SER-236; SER-340; PRO-433 AND ARG-513</scope>
</reference>
<reference key="11">
    <citation type="journal article" date="2011" name="Hum. Mutat.">
        <title>Mutations and deletions in PCDH19 account for various familial or isolated epilepsies in females.</title>
        <authorList>
            <person name="Depienne C."/>
            <person name="Trouillard O."/>
            <person name="Bouteiller D."/>
            <person name="Gourfinkel-An I."/>
            <person name="Poirier K."/>
            <person name="Rivier F."/>
            <person name="Berquin P."/>
            <person name="Nabbout R."/>
            <person name="Chaigne D."/>
            <person name="Steschenko D."/>
            <person name="Gautier A."/>
            <person name="Hoffman-Zacharska D."/>
            <person name="Lannuzel A."/>
            <person name="Lackmy-Port-Lis M."/>
            <person name="Maurey H."/>
            <person name="Dusser A."/>
            <person name="Bru M."/>
            <person name="Gilbert-Dussardier B."/>
            <person name="Roubertie A."/>
            <person name="Kaminska A."/>
            <person name="Whalen S."/>
            <person name="Mignot C."/>
            <person name="Baulac S."/>
            <person name="Lesca G."/>
            <person name="Arzimanoglou A."/>
            <person name="LeGuern E."/>
        </authorList>
    </citation>
    <scope>VARIANTS DEE9 ARG-81; SER-GLU-ALA-141 INS; ARG-146; TYR-206; ASP-249; GLU-341; ARG-561; LEU-567 AND ASN-618</scope>
</reference>
<reference key="12">
    <citation type="journal article" date="2011" name="Neurology">
        <title>Recurrence risk of epilepsy and mental retardation in females due to parental mosaicism of PCDH19 mutations.</title>
        <authorList>
            <person name="Dibbens L.M."/>
            <person name="Kneen R."/>
            <person name="Bayly M.A."/>
            <person name="Heron S.E."/>
            <person name="Arsov T."/>
            <person name="Damiano J.A."/>
            <person name="Desai T."/>
            <person name="Gibbs J."/>
            <person name="McKenzie F."/>
            <person name="Mulley J.C."/>
            <person name="Ronan A."/>
            <person name="Scheffer I.E."/>
        </authorList>
    </citation>
    <scope>VARIANTS DEE9 PRO-25 AND SER-340</scope>
</reference>
<reference key="13">
    <citation type="journal article" date="2012" name="Epilepsy Res.">
        <title>PCDH19 mutation in Japanese females with epilepsy.</title>
        <authorList>
            <person name="Higurashi N."/>
            <person name="Shi X."/>
            <person name="Yasumoto S."/>
            <person name="Oguni H."/>
            <person name="Sakauchi M."/>
            <person name="Itomi K."/>
            <person name="Miyamoto A."/>
            <person name="Shiraishi H."/>
            <person name="Kato T."/>
            <person name="Makita Y."/>
            <person name="Hirose S."/>
        </authorList>
    </citation>
    <scope>VARIANTS DEE9 GLY-72; LEU-191 AND SER-340</scope>
    <scope>VARIANTS HIS-1107 AND HIS-1134</scope>
</reference>
<reference key="14">
    <citation type="journal article" date="2012" name="Hum. Mutat.">
        <title>PCDH19-related infantile epileptic encephalopathy: An unusual X-linked inheritance disorder.</title>
        <authorList>
            <person name="Depienne C."/>
            <person name="Leguern E."/>
        </authorList>
    </citation>
    <scope>VARIANTS DEE9 THR-153; ARG-190; SER-232; SER-234; ASP-262; ARG-344; GLU-377 AND MET-642</scope>
    <scope>VARIANTS CYS-980; VAL-1094 AND HIS-1134</scope>
</reference>
<reference key="15">
    <citation type="journal article" date="2015" name="Epilepsia">
        <title>Diagnostic yield of genetic testing in epileptic encephalopathy in childhood.</title>
        <authorList>
            <person name="Mercimek-Mahmutoglu S."/>
            <person name="Patel J."/>
            <person name="Cordeiro D."/>
            <person name="Hewson S."/>
            <person name="Callen D."/>
            <person name="Donner E.J."/>
            <person name="Hahn C.D."/>
            <person name="Kannu P."/>
            <person name="Kobayashi J."/>
            <person name="Minassian B.A."/>
            <person name="Moharir M."/>
            <person name="Siriwardena K."/>
            <person name="Weiss S.K."/>
            <person name="Weksberg R."/>
            <person name="Snead O.C. III"/>
        </authorList>
    </citation>
    <scope>VARIANT DEE9 158-SER--LEU-1148 DEL</scope>
</reference>
<reference key="16">
    <citation type="journal article" date="2016" name="J. Med. Genet.">
        <title>Improving diagnosis and broadening the phenotypes in early-onset seizure and severe developmental delay disorders through gene panel analysis.</title>
        <authorList>
            <person name="Trump N."/>
            <person name="McTague A."/>
            <person name="Brittain H."/>
            <person name="Papandreou A."/>
            <person name="Meyer E."/>
            <person name="Ngoh A."/>
            <person name="Palmer R."/>
            <person name="Morrogh D."/>
            <person name="Boustred C."/>
            <person name="Hurst J.A."/>
            <person name="Jenkins L."/>
            <person name="Kurian M.A."/>
            <person name="Scott R.H."/>
        </authorList>
    </citation>
    <scope>VARIANTS DEE9 ASN-230 AND LEU-236</scope>
</reference>
<reference key="17">
    <citation type="journal article" date="2017" name="Hum. Mutat.">
        <title>Diagnostic targeted resequencing in 349 patients with drug-resistant pediatric epilepsies identifies causative mutations in 30 different genes.</title>
        <authorList>
            <consortium name="Clinical Study Group"/>
            <person name="Parrini E."/>
            <person name="Marini C."/>
            <person name="Mei D."/>
            <person name="Galuppi A."/>
            <person name="Cellini E."/>
            <person name="Pucatti D."/>
            <person name="Chiti L."/>
            <person name="Rutigliano D."/>
            <person name="Bianchini C."/>
            <person name="Virdo S."/>
            <person name="De Vita D."/>
            <person name="Bigoni S."/>
            <person name="Barba C."/>
            <person name="Mari F."/>
            <person name="Montomoli M."/>
            <person name="Pisano T."/>
            <person name="Rosati A."/>
            <person name="Guerrini R."/>
        </authorList>
    </citation>
    <scope>VARIANT HIS-447</scope>
</reference>
<accession>Q8TAB3</accession>
<accession>B0LDS4</accession>
<accession>E9PAM6</accession>
<accession>Q5JTG1</accession>
<accession>Q5JTG2</accession>
<accession>Q68DT7</accession>
<accession>Q9P2N3</accession>
<organism>
    <name type="scientific">Homo sapiens</name>
    <name type="common">Human</name>
    <dbReference type="NCBI Taxonomy" id="9606"/>
    <lineage>
        <taxon>Eukaryota</taxon>
        <taxon>Metazoa</taxon>
        <taxon>Chordata</taxon>
        <taxon>Craniata</taxon>
        <taxon>Vertebrata</taxon>
        <taxon>Euteleostomi</taxon>
        <taxon>Mammalia</taxon>
        <taxon>Eutheria</taxon>
        <taxon>Euarchontoglires</taxon>
        <taxon>Primates</taxon>
        <taxon>Haplorrhini</taxon>
        <taxon>Catarrhini</taxon>
        <taxon>Hominidae</taxon>
        <taxon>Homo</taxon>
    </lineage>
</organism>